<sequence>MMKEVLSTGQGNTEVIHTGTLQRYQSYHIGDFCFQEIEKEIHDIEFQCQEDERNGHEAPMTKIKKLTGSTDQHDHRHAGNKPIKDQLGSSFYSHLPELHIIQIKGKIGNQFEKSTSDAPSVSTSQRISPRPQIHISNNYGNNSPNSSLLPQKQEVYMREKSFQCNESGKAFNCSSLLRKHQIPHLGDKQYKCDVCGKLFNHKQYLTCHCRCHTGEKPYKCNECGKSFSQVSSLTCHRRLHTAVKSHKCNECGKIFGQNSALVIHKAIHTGEKPYKCNECDKAFNQQSNLARHRRIHTGEKPYKCEECDKVFSRKSTLESHKRIHTGEKPYKCKVCDTAFTWNSQLARHKRIHTGEKTYKCNECGKTFSHKSSLVCHHRLHGGEKSYKCKVCDKAFAWNSHLVRHTRIHSGGKPYKCNECGKTFGQNSDLLIHKSIHTGEQPYKYEECEKVFSCGSTLETHKIIHTGEKPYKCKVCDKAFACHSYLAKHTRIHSGEKPYKCNECSKTFRLRSYLASHRRVHSGEKPYKCNECSKTFSQRSYLHCHRRLHSGEKPYKCNECGKTFSHKPSLVHHRRLHTGEKSYKCTVCDKAFVRNSYLARHTRIHTAEKPYKCNECGKAFNQQSQLSLHHRIHAGEKLYKCETCDKVFSRKSHLKRHRRIHPGKKPYKCKVCDKTFGSDSHLKQHTGLHTGEKPYKCNECGKAFSKQSTLIHHQAVHGVGKLD</sequence>
<dbReference type="EMBL" id="AK131231">
    <property type="protein sequence ID" value="BAD18414.1"/>
    <property type="molecule type" value="mRNA"/>
</dbReference>
<dbReference type="EMBL" id="BX640933">
    <property type="protein sequence ID" value="CAE45968.1"/>
    <property type="molecule type" value="mRNA"/>
</dbReference>
<dbReference type="EMBL" id="AC008813">
    <property type="status" value="NOT_ANNOTATED_CDS"/>
    <property type="molecule type" value="Genomic_DNA"/>
</dbReference>
<dbReference type="CCDS" id="CCDS12856.1"/>
<dbReference type="RefSeq" id="NP_001308795.1">
    <property type="nucleotide sequence ID" value="NM_001321866.1"/>
</dbReference>
<dbReference type="RefSeq" id="NP_001308796.1">
    <property type="nucleotide sequence ID" value="NM_001321867.1"/>
</dbReference>
<dbReference type="RefSeq" id="NP_940859.3">
    <property type="nucleotide sequence ID" value="NM_198457.5"/>
</dbReference>
<dbReference type="RefSeq" id="XP_047294255.1">
    <property type="nucleotide sequence ID" value="XM_047438299.1"/>
</dbReference>
<dbReference type="SMR" id="Q6ZNG1"/>
<dbReference type="BioGRID" id="127833">
    <property type="interactions" value="4"/>
</dbReference>
<dbReference type="FunCoup" id="Q6ZNG1">
    <property type="interactions" value="5"/>
</dbReference>
<dbReference type="IntAct" id="Q6ZNG1">
    <property type="interactions" value="3"/>
</dbReference>
<dbReference type="STRING" id="9606.ENSP00000344791"/>
<dbReference type="iPTMnet" id="Q6ZNG1"/>
<dbReference type="PhosphoSitePlus" id="Q6ZNG1"/>
<dbReference type="BioMuta" id="ZNF600"/>
<dbReference type="DMDM" id="296453048"/>
<dbReference type="jPOST" id="Q6ZNG1"/>
<dbReference type="MassIVE" id="Q6ZNG1"/>
<dbReference type="PaxDb" id="9606-ENSP00000344791"/>
<dbReference type="PeptideAtlas" id="Q6ZNG1"/>
<dbReference type="ProteomicsDB" id="68023"/>
<dbReference type="Antibodypedia" id="56950">
    <property type="antibodies" value="41 antibodies from 17 providers"/>
</dbReference>
<dbReference type="DNASU" id="162966"/>
<dbReference type="Ensembl" id="ENST00000338230.3">
    <property type="protein sequence ID" value="ENSP00000344791.2"/>
    <property type="gene ID" value="ENSG00000189190.11"/>
</dbReference>
<dbReference type="GeneID" id="162966"/>
<dbReference type="KEGG" id="hsa:162966"/>
<dbReference type="UCSC" id="uc002qab.5">
    <property type="organism name" value="human"/>
</dbReference>
<dbReference type="AGR" id="HGNC:30951"/>
<dbReference type="CTD" id="162966"/>
<dbReference type="DisGeNET" id="162966"/>
<dbReference type="GeneCards" id="ZNF600"/>
<dbReference type="HGNC" id="HGNC:30951">
    <property type="gene designation" value="ZNF600"/>
</dbReference>
<dbReference type="HPA" id="ENSG00000189190">
    <property type="expression patterns" value="Low tissue specificity"/>
</dbReference>
<dbReference type="neXtProt" id="NX_Q6ZNG1"/>
<dbReference type="OpenTargets" id="ENSG00000189190"/>
<dbReference type="PharmGKB" id="PA134977938"/>
<dbReference type="VEuPathDB" id="HostDB:ENSG00000189190"/>
<dbReference type="eggNOG" id="KOG1721">
    <property type="taxonomic scope" value="Eukaryota"/>
</dbReference>
<dbReference type="GeneTree" id="ENSGT00940000164431"/>
<dbReference type="HOGENOM" id="CLU_002678_17_0_1"/>
<dbReference type="InParanoid" id="Q6ZNG1"/>
<dbReference type="OrthoDB" id="8922241at2759"/>
<dbReference type="PAN-GO" id="Q6ZNG1">
    <property type="GO annotations" value="4 GO annotations based on evolutionary models"/>
</dbReference>
<dbReference type="PhylomeDB" id="Q6ZNG1"/>
<dbReference type="TreeFam" id="TF341892"/>
<dbReference type="PathwayCommons" id="Q6ZNG1"/>
<dbReference type="Reactome" id="R-HSA-212436">
    <property type="pathway name" value="Generic Transcription Pathway"/>
</dbReference>
<dbReference type="SignaLink" id="Q6ZNG1"/>
<dbReference type="BioGRID-ORCS" id="162966">
    <property type="hits" value="10 hits in 1169 CRISPR screens"/>
</dbReference>
<dbReference type="GenomeRNAi" id="162966"/>
<dbReference type="Pharos" id="Q6ZNG1">
    <property type="development level" value="Tdark"/>
</dbReference>
<dbReference type="PRO" id="PR:Q6ZNG1"/>
<dbReference type="Proteomes" id="UP000005640">
    <property type="component" value="Chromosome 19"/>
</dbReference>
<dbReference type="RNAct" id="Q6ZNG1">
    <property type="molecule type" value="protein"/>
</dbReference>
<dbReference type="Bgee" id="ENSG00000189190">
    <property type="expression patterns" value="Expressed in pancreatic ductal cell and 177 other cell types or tissues"/>
</dbReference>
<dbReference type="ExpressionAtlas" id="Q6ZNG1">
    <property type="expression patterns" value="baseline and differential"/>
</dbReference>
<dbReference type="GO" id="GO:0005634">
    <property type="term" value="C:nucleus"/>
    <property type="evidence" value="ECO:0000318"/>
    <property type="project" value="GO_Central"/>
</dbReference>
<dbReference type="GO" id="GO:0003677">
    <property type="term" value="F:DNA binding"/>
    <property type="evidence" value="ECO:0007669"/>
    <property type="project" value="UniProtKB-KW"/>
</dbReference>
<dbReference type="GO" id="GO:0008270">
    <property type="term" value="F:zinc ion binding"/>
    <property type="evidence" value="ECO:0007669"/>
    <property type="project" value="UniProtKB-KW"/>
</dbReference>
<dbReference type="GO" id="GO:0006357">
    <property type="term" value="P:regulation of transcription by RNA polymerase II"/>
    <property type="evidence" value="ECO:0000318"/>
    <property type="project" value="GO_Central"/>
</dbReference>
<dbReference type="FunFam" id="3.30.160.60:FF:000040">
    <property type="entry name" value="RB associated KRAB zinc finger"/>
    <property type="match status" value="1"/>
</dbReference>
<dbReference type="FunFam" id="3.30.160.60:FF:000744">
    <property type="entry name" value="zinc finger E-box-binding homeobox 1"/>
    <property type="match status" value="1"/>
</dbReference>
<dbReference type="FunFam" id="3.30.160.60:FF:000824">
    <property type="entry name" value="Zinc finger protein 184"/>
    <property type="match status" value="1"/>
</dbReference>
<dbReference type="FunFam" id="3.30.160.60:FF:000681">
    <property type="entry name" value="zinc finger protein 205 isoform X1"/>
    <property type="match status" value="1"/>
</dbReference>
<dbReference type="FunFam" id="3.30.160.60:FF:000226">
    <property type="entry name" value="Zinc finger protein 236 variant"/>
    <property type="match status" value="1"/>
</dbReference>
<dbReference type="FunFam" id="3.30.160.60:FF:000992">
    <property type="entry name" value="Zinc finger protein 320"/>
    <property type="match status" value="5"/>
</dbReference>
<dbReference type="FunFam" id="3.30.160.60:FF:002343">
    <property type="entry name" value="Zinc finger protein 33A"/>
    <property type="match status" value="1"/>
</dbReference>
<dbReference type="FunFam" id="3.30.160.60:FF:000016">
    <property type="entry name" value="zinc finger protein 37 homolog"/>
    <property type="match status" value="2"/>
</dbReference>
<dbReference type="FunFam" id="3.30.160.60:FF:002090">
    <property type="entry name" value="Zinc finger protein 473"/>
    <property type="match status" value="2"/>
</dbReference>
<dbReference type="FunFam" id="3.30.160.60:FF:000149">
    <property type="entry name" value="Zinc finger protein 569"/>
    <property type="match status" value="1"/>
</dbReference>
<dbReference type="FunFam" id="3.30.160.60:FF:001090">
    <property type="entry name" value="zinc finger protein 629 isoform X2"/>
    <property type="match status" value="1"/>
</dbReference>
<dbReference type="FunFam" id="3.30.160.60:FF:000188">
    <property type="entry name" value="Zinc finger protein 787"/>
    <property type="match status" value="1"/>
</dbReference>
<dbReference type="FunFam" id="3.30.160.60:FF:002289">
    <property type="entry name" value="Zinc finger protein 813"/>
    <property type="match status" value="1"/>
</dbReference>
<dbReference type="FunFam" id="3.30.160.60:FF:000307">
    <property type="entry name" value="Zinc finger protein ZFP69 isoform 1"/>
    <property type="match status" value="1"/>
</dbReference>
<dbReference type="Gene3D" id="3.30.160.60">
    <property type="entry name" value="Classic Zinc Finger"/>
    <property type="match status" value="20"/>
</dbReference>
<dbReference type="InterPro" id="IPR036236">
    <property type="entry name" value="Znf_C2H2_sf"/>
</dbReference>
<dbReference type="InterPro" id="IPR013087">
    <property type="entry name" value="Znf_C2H2_type"/>
</dbReference>
<dbReference type="PANTHER" id="PTHR24394">
    <property type="entry name" value="ZINC FINGER PROTEIN"/>
    <property type="match status" value="1"/>
</dbReference>
<dbReference type="PANTHER" id="PTHR24394:SF48">
    <property type="entry name" value="ZINC FINGER PROTEIN 771"/>
    <property type="match status" value="1"/>
</dbReference>
<dbReference type="Pfam" id="PF00096">
    <property type="entry name" value="zf-C2H2"/>
    <property type="match status" value="14"/>
</dbReference>
<dbReference type="Pfam" id="PF12874">
    <property type="entry name" value="zf-met"/>
    <property type="match status" value="1"/>
</dbReference>
<dbReference type="SMART" id="SM00355">
    <property type="entry name" value="ZnF_C2H2"/>
    <property type="match status" value="19"/>
</dbReference>
<dbReference type="SUPFAM" id="SSF57667">
    <property type="entry name" value="beta-beta-alpha zinc fingers"/>
    <property type="match status" value="11"/>
</dbReference>
<dbReference type="PROSITE" id="PS00028">
    <property type="entry name" value="ZINC_FINGER_C2H2_1"/>
    <property type="match status" value="18"/>
</dbReference>
<dbReference type="PROSITE" id="PS50157">
    <property type="entry name" value="ZINC_FINGER_C2H2_2"/>
    <property type="match status" value="20"/>
</dbReference>
<comment type="function">
    <text>May be involved in transcriptional regulation.</text>
</comment>
<comment type="interaction">
    <interactant intactId="EBI-3444696">
        <id>Q6ZNG1</id>
    </interactant>
    <interactant intactId="EBI-12012928">
        <id>P60371</id>
        <label>KRTAP10-6</label>
    </interactant>
    <organismsDiffer>false</organismsDiffer>
    <experiments>3</experiments>
</comment>
<comment type="subcellular location">
    <subcellularLocation>
        <location evidence="4">Nucleus</location>
    </subcellularLocation>
</comment>
<comment type="similarity">
    <text evidence="4">Belongs to the krueppel C2H2-type zinc-finger protein family.</text>
</comment>
<organism>
    <name type="scientific">Homo sapiens</name>
    <name type="common">Human</name>
    <dbReference type="NCBI Taxonomy" id="9606"/>
    <lineage>
        <taxon>Eukaryota</taxon>
        <taxon>Metazoa</taxon>
        <taxon>Chordata</taxon>
        <taxon>Craniata</taxon>
        <taxon>Vertebrata</taxon>
        <taxon>Euteleostomi</taxon>
        <taxon>Mammalia</taxon>
        <taxon>Eutheria</taxon>
        <taxon>Euarchontoglires</taxon>
        <taxon>Primates</taxon>
        <taxon>Haplorrhini</taxon>
        <taxon>Catarrhini</taxon>
        <taxon>Hominidae</taxon>
        <taxon>Homo</taxon>
    </lineage>
</organism>
<reference key="1">
    <citation type="journal article" date="2004" name="Nat. Genet.">
        <title>Complete sequencing and characterization of 21,243 full-length human cDNAs.</title>
        <authorList>
            <person name="Ota T."/>
            <person name="Suzuki Y."/>
            <person name="Nishikawa T."/>
            <person name="Otsuki T."/>
            <person name="Sugiyama T."/>
            <person name="Irie R."/>
            <person name="Wakamatsu A."/>
            <person name="Hayashi K."/>
            <person name="Sato H."/>
            <person name="Nagai K."/>
            <person name="Kimura K."/>
            <person name="Makita H."/>
            <person name="Sekine M."/>
            <person name="Obayashi M."/>
            <person name="Nishi T."/>
            <person name="Shibahara T."/>
            <person name="Tanaka T."/>
            <person name="Ishii S."/>
            <person name="Yamamoto J."/>
            <person name="Saito K."/>
            <person name="Kawai Y."/>
            <person name="Isono Y."/>
            <person name="Nakamura Y."/>
            <person name="Nagahari K."/>
            <person name="Murakami K."/>
            <person name="Yasuda T."/>
            <person name="Iwayanagi T."/>
            <person name="Wagatsuma M."/>
            <person name="Shiratori A."/>
            <person name="Sudo H."/>
            <person name="Hosoiri T."/>
            <person name="Kaku Y."/>
            <person name="Kodaira H."/>
            <person name="Kondo H."/>
            <person name="Sugawara M."/>
            <person name="Takahashi M."/>
            <person name="Kanda K."/>
            <person name="Yokoi T."/>
            <person name="Furuya T."/>
            <person name="Kikkawa E."/>
            <person name="Omura Y."/>
            <person name="Abe K."/>
            <person name="Kamihara K."/>
            <person name="Katsuta N."/>
            <person name="Sato K."/>
            <person name="Tanikawa M."/>
            <person name="Yamazaki M."/>
            <person name="Ninomiya K."/>
            <person name="Ishibashi T."/>
            <person name="Yamashita H."/>
            <person name="Murakawa K."/>
            <person name="Fujimori K."/>
            <person name="Tanai H."/>
            <person name="Kimata M."/>
            <person name="Watanabe M."/>
            <person name="Hiraoka S."/>
            <person name="Chiba Y."/>
            <person name="Ishida S."/>
            <person name="Ono Y."/>
            <person name="Takiguchi S."/>
            <person name="Watanabe S."/>
            <person name="Yosida M."/>
            <person name="Hotuta T."/>
            <person name="Kusano J."/>
            <person name="Kanehori K."/>
            <person name="Takahashi-Fujii A."/>
            <person name="Hara H."/>
            <person name="Tanase T.-O."/>
            <person name="Nomura Y."/>
            <person name="Togiya S."/>
            <person name="Komai F."/>
            <person name="Hara R."/>
            <person name="Takeuchi K."/>
            <person name="Arita M."/>
            <person name="Imose N."/>
            <person name="Musashino K."/>
            <person name="Yuuki H."/>
            <person name="Oshima A."/>
            <person name="Sasaki N."/>
            <person name="Aotsuka S."/>
            <person name="Yoshikawa Y."/>
            <person name="Matsunawa H."/>
            <person name="Ichihara T."/>
            <person name="Shiohata N."/>
            <person name="Sano S."/>
            <person name="Moriya S."/>
            <person name="Momiyama H."/>
            <person name="Satoh N."/>
            <person name="Takami S."/>
            <person name="Terashima Y."/>
            <person name="Suzuki O."/>
            <person name="Nakagawa S."/>
            <person name="Senoh A."/>
            <person name="Mizoguchi H."/>
            <person name="Goto Y."/>
            <person name="Shimizu F."/>
            <person name="Wakebe H."/>
            <person name="Hishigaki H."/>
            <person name="Watanabe T."/>
            <person name="Sugiyama A."/>
            <person name="Takemoto M."/>
            <person name="Kawakami B."/>
            <person name="Yamazaki M."/>
            <person name="Watanabe K."/>
            <person name="Kumagai A."/>
            <person name="Itakura S."/>
            <person name="Fukuzumi Y."/>
            <person name="Fujimori Y."/>
            <person name="Komiyama M."/>
            <person name="Tashiro H."/>
            <person name="Tanigami A."/>
            <person name="Fujiwara T."/>
            <person name="Ono T."/>
            <person name="Yamada K."/>
            <person name="Fujii Y."/>
            <person name="Ozaki K."/>
            <person name="Hirao M."/>
            <person name="Ohmori Y."/>
            <person name="Kawabata A."/>
            <person name="Hikiji T."/>
            <person name="Kobatake N."/>
            <person name="Inagaki H."/>
            <person name="Ikema Y."/>
            <person name="Okamoto S."/>
            <person name="Okitani R."/>
            <person name="Kawakami T."/>
            <person name="Noguchi S."/>
            <person name="Itoh T."/>
            <person name="Shigeta K."/>
            <person name="Senba T."/>
            <person name="Matsumura K."/>
            <person name="Nakajima Y."/>
            <person name="Mizuno T."/>
            <person name="Morinaga M."/>
            <person name="Sasaki M."/>
            <person name="Togashi T."/>
            <person name="Oyama M."/>
            <person name="Hata H."/>
            <person name="Watanabe M."/>
            <person name="Komatsu T."/>
            <person name="Mizushima-Sugano J."/>
            <person name="Satoh T."/>
            <person name="Shirai Y."/>
            <person name="Takahashi Y."/>
            <person name="Nakagawa K."/>
            <person name="Okumura K."/>
            <person name="Nagase T."/>
            <person name="Nomura N."/>
            <person name="Kikuchi H."/>
            <person name="Masuho Y."/>
            <person name="Yamashita R."/>
            <person name="Nakai K."/>
            <person name="Yada T."/>
            <person name="Nakamura Y."/>
            <person name="Ohara O."/>
            <person name="Isogai T."/>
            <person name="Sugano S."/>
        </authorList>
    </citation>
    <scope>NUCLEOTIDE SEQUENCE [LARGE SCALE MRNA]</scope>
    <scope>VARIANT ARG-209</scope>
    <source>
        <tissue>Amygdala</tissue>
    </source>
</reference>
<reference key="2">
    <citation type="journal article" date="2007" name="BMC Genomics">
        <title>The full-ORF clone resource of the German cDNA consortium.</title>
        <authorList>
            <person name="Bechtel S."/>
            <person name="Rosenfelder H."/>
            <person name="Duda A."/>
            <person name="Schmidt C.P."/>
            <person name="Ernst U."/>
            <person name="Wellenreuther R."/>
            <person name="Mehrle A."/>
            <person name="Schuster C."/>
            <person name="Bahr A."/>
            <person name="Bloecker H."/>
            <person name="Heubner D."/>
            <person name="Hoerlein A."/>
            <person name="Michel G."/>
            <person name="Wedler H."/>
            <person name="Koehrer K."/>
            <person name="Ottenwaelder B."/>
            <person name="Poustka A."/>
            <person name="Wiemann S."/>
            <person name="Schupp I."/>
        </authorList>
    </citation>
    <scope>NUCLEOTIDE SEQUENCE [LARGE SCALE MRNA]</scope>
    <scope>VARIANT ARG-209</scope>
    <source>
        <tissue>Uterus</tissue>
    </source>
</reference>
<reference key="3">
    <citation type="journal article" date="2004" name="Nature">
        <title>The DNA sequence and biology of human chromosome 19.</title>
        <authorList>
            <person name="Grimwood J."/>
            <person name="Gordon L.A."/>
            <person name="Olsen A.S."/>
            <person name="Terry A."/>
            <person name="Schmutz J."/>
            <person name="Lamerdin J.E."/>
            <person name="Hellsten U."/>
            <person name="Goodstein D."/>
            <person name="Couronne O."/>
            <person name="Tran-Gyamfi M."/>
            <person name="Aerts A."/>
            <person name="Altherr M."/>
            <person name="Ashworth L."/>
            <person name="Bajorek E."/>
            <person name="Black S."/>
            <person name="Branscomb E."/>
            <person name="Caenepeel S."/>
            <person name="Carrano A.V."/>
            <person name="Caoile C."/>
            <person name="Chan Y.M."/>
            <person name="Christensen M."/>
            <person name="Cleland C.A."/>
            <person name="Copeland A."/>
            <person name="Dalin E."/>
            <person name="Dehal P."/>
            <person name="Denys M."/>
            <person name="Detter J.C."/>
            <person name="Escobar J."/>
            <person name="Flowers D."/>
            <person name="Fotopulos D."/>
            <person name="Garcia C."/>
            <person name="Georgescu A.M."/>
            <person name="Glavina T."/>
            <person name="Gomez M."/>
            <person name="Gonzales E."/>
            <person name="Groza M."/>
            <person name="Hammon N."/>
            <person name="Hawkins T."/>
            <person name="Haydu L."/>
            <person name="Ho I."/>
            <person name="Huang W."/>
            <person name="Israni S."/>
            <person name="Jett J."/>
            <person name="Kadner K."/>
            <person name="Kimball H."/>
            <person name="Kobayashi A."/>
            <person name="Larionov V."/>
            <person name="Leem S.-H."/>
            <person name="Lopez F."/>
            <person name="Lou Y."/>
            <person name="Lowry S."/>
            <person name="Malfatti S."/>
            <person name="Martinez D."/>
            <person name="McCready P.M."/>
            <person name="Medina C."/>
            <person name="Morgan J."/>
            <person name="Nelson K."/>
            <person name="Nolan M."/>
            <person name="Ovcharenko I."/>
            <person name="Pitluck S."/>
            <person name="Pollard M."/>
            <person name="Popkie A.P."/>
            <person name="Predki P."/>
            <person name="Quan G."/>
            <person name="Ramirez L."/>
            <person name="Rash S."/>
            <person name="Retterer J."/>
            <person name="Rodriguez A."/>
            <person name="Rogers S."/>
            <person name="Salamov A."/>
            <person name="Salazar A."/>
            <person name="She X."/>
            <person name="Smith D."/>
            <person name="Slezak T."/>
            <person name="Solovyev V."/>
            <person name="Thayer N."/>
            <person name="Tice H."/>
            <person name="Tsai M."/>
            <person name="Ustaszewska A."/>
            <person name="Vo N."/>
            <person name="Wagner M."/>
            <person name="Wheeler J."/>
            <person name="Wu K."/>
            <person name="Xie G."/>
            <person name="Yang J."/>
            <person name="Dubchak I."/>
            <person name="Furey T.S."/>
            <person name="DeJong P."/>
            <person name="Dickson M."/>
            <person name="Gordon D."/>
            <person name="Eichler E.E."/>
            <person name="Pennacchio L.A."/>
            <person name="Richardson P."/>
            <person name="Stubbs L."/>
            <person name="Rokhsar D.S."/>
            <person name="Myers R.M."/>
            <person name="Rubin E.M."/>
            <person name="Lucas S.M."/>
        </authorList>
    </citation>
    <scope>NUCLEOTIDE SEQUENCE [LARGE SCALE GENOMIC DNA]</scope>
</reference>
<reference key="4">
    <citation type="journal article" date="2009" name="Sci. Signal.">
        <title>Quantitative phosphoproteomic analysis of T cell receptor signaling reveals system-wide modulation of protein-protein interactions.</title>
        <authorList>
            <person name="Mayya V."/>
            <person name="Lundgren D.H."/>
            <person name="Hwang S.-I."/>
            <person name="Rezaul K."/>
            <person name="Wu L."/>
            <person name="Eng J.K."/>
            <person name="Rodionov V."/>
            <person name="Han D.K."/>
        </authorList>
    </citation>
    <scope>IDENTIFICATION BY MASS SPECTROMETRY [LARGE SCALE ANALYSIS]</scope>
    <source>
        <tissue>Leukemic T-cell</tissue>
    </source>
</reference>
<proteinExistence type="evidence at protein level"/>
<feature type="chain" id="PRO_0000234593" description="Zinc finger protein 600">
    <location>
        <begin position="1"/>
        <end position="722"/>
    </location>
</feature>
<feature type="zinc finger region" description="C2H2-type 1; degenerate" evidence="1">
    <location>
        <begin position="162"/>
        <end position="184"/>
    </location>
</feature>
<feature type="zinc finger region" description="C2H2-type 2" evidence="1">
    <location>
        <begin position="190"/>
        <end position="212"/>
    </location>
</feature>
<feature type="zinc finger region" description="C2H2-type 3" evidence="1">
    <location>
        <begin position="218"/>
        <end position="240"/>
    </location>
</feature>
<feature type="zinc finger region" description="C2H2-type 4" evidence="1">
    <location>
        <begin position="246"/>
        <end position="268"/>
    </location>
</feature>
<feature type="zinc finger region" description="C2H2-type 5" evidence="1">
    <location>
        <begin position="274"/>
        <end position="296"/>
    </location>
</feature>
<feature type="zinc finger region" description="C2H2-type 6" evidence="1">
    <location>
        <begin position="302"/>
        <end position="324"/>
    </location>
</feature>
<feature type="zinc finger region" description="C2H2-type 7" evidence="1">
    <location>
        <begin position="330"/>
        <end position="352"/>
    </location>
</feature>
<feature type="zinc finger region" description="C2H2-type 8" evidence="1">
    <location>
        <begin position="358"/>
        <end position="380"/>
    </location>
</feature>
<feature type="zinc finger region" description="C2H2-type 9" evidence="1">
    <location>
        <begin position="386"/>
        <end position="408"/>
    </location>
</feature>
<feature type="zinc finger region" description="C2H2-type 10" evidence="1">
    <location>
        <begin position="414"/>
        <end position="436"/>
    </location>
</feature>
<feature type="zinc finger region" description="C2H2-type 11; degenerate" evidence="1">
    <location>
        <begin position="442"/>
        <end position="464"/>
    </location>
</feature>
<feature type="zinc finger region" description="C2H2-type 12" evidence="1">
    <location>
        <begin position="470"/>
        <end position="492"/>
    </location>
</feature>
<feature type="zinc finger region" description="C2H2-type 13" evidence="1">
    <location>
        <begin position="498"/>
        <end position="520"/>
    </location>
</feature>
<feature type="zinc finger region" description="C2H2-type 14" evidence="1">
    <location>
        <begin position="526"/>
        <end position="548"/>
    </location>
</feature>
<feature type="zinc finger region" description="C2H2-type 15" evidence="1">
    <location>
        <begin position="554"/>
        <end position="576"/>
    </location>
</feature>
<feature type="zinc finger region" description="C2H2-type 16" evidence="1">
    <location>
        <begin position="582"/>
        <end position="604"/>
    </location>
</feature>
<feature type="zinc finger region" description="C2H2-type 17" evidence="1">
    <location>
        <begin position="610"/>
        <end position="632"/>
    </location>
</feature>
<feature type="zinc finger region" description="C2H2-type 18" evidence="1">
    <location>
        <begin position="638"/>
        <end position="660"/>
    </location>
</feature>
<feature type="zinc finger region" description="C2H2-type 19" evidence="1">
    <location>
        <begin position="666"/>
        <end position="688"/>
    </location>
</feature>
<feature type="zinc finger region" description="C2H2-type 20" evidence="1">
    <location>
        <begin position="694"/>
        <end position="716"/>
    </location>
</feature>
<feature type="sequence variant" id="VAR_057427" description="In dbSNP:rs7252818.">
    <original>M</original>
    <variation>V</variation>
    <location>
        <position position="2"/>
    </location>
</feature>
<feature type="sequence variant" id="VAR_059925" description="In dbSNP:rs7252128.">
    <original>T</original>
    <variation>R</variation>
    <location>
        <position position="13"/>
    </location>
</feature>
<feature type="sequence variant" id="VAR_059926" description="In dbSNP:rs1820128." evidence="2 3">
    <original>C</original>
    <variation>R</variation>
    <location>
        <position position="209"/>
    </location>
</feature>
<feature type="sequence conflict" description="In Ref. 1; BAD18414." evidence="4" ref="1">
    <original>R</original>
    <variation>H</variation>
    <location>
        <position position="508"/>
    </location>
</feature>
<feature type="sequence conflict" description="In Ref. 2; CAE45968." evidence="4" ref="2">
    <original>I</original>
    <variation>V</variation>
    <location>
        <position position="631"/>
    </location>
</feature>
<name>ZN600_HUMAN</name>
<keyword id="KW-0238">DNA-binding</keyword>
<keyword id="KW-0479">Metal-binding</keyword>
<keyword id="KW-0539">Nucleus</keyword>
<keyword id="KW-1267">Proteomics identification</keyword>
<keyword id="KW-1185">Reference proteome</keyword>
<keyword id="KW-0677">Repeat</keyword>
<keyword id="KW-0804">Transcription</keyword>
<keyword id="KW-0805">Transcription regulation</keyword>
<keyword id="KW-0862">Zinc</keyword>
<keyword id="KW-0863">Zinc-finger</keyword>
<gene>
    <name type="primary">ZNF600</name>
</gene>
<protein>
    <recommendedName>
        <fullName>Zinc finger protein 600</fullName>
    </recommendedName>
</protein>
<accession>Q6ZNG1</accession>
<accession>Q6MZR0</accession>
<evidence type="ECO:0000255" key="1">
    <source>
        <dbReference type="PROSITE-ProRule" id="PRU00042"/>
    </source>
</evidence>
<evidence type="ECO:0000269" key="2">
    <source>
    </source>
</evidence>
<evidence type="ECO:0000269" key="3">
    <source>
    </source>
</evidence>
<evidence type="ECO:0000305" key="4"/>